<proteinExistence type="evidence at transcript level"/>
<accession>Q3SWZ7</accession>
<comment type="function">
    <text evidence="1">RNA chaperone that plays a key role in telomere maintenance and RNA localization to Cajal bodies. Specifically recognizes and binds the Cajal body box (CAB box) present in both small Cajal body RNAs (scaRNAs) and telomerase RNA template component (TERC). Essential component of the telomerase holoenzyme complex, a ribonucleoprotein complex essential for the replication of chromosome termini that elongates telomeres in most eukaryotes. In the telomerase holoenzyme complex, required to stimulate the catalytic activity of the complex. Acts by specifically binding the CAB box of the TERC RNA and controlling the folding of the CR4/CR5 region of the TERC RNA, a critical step for telomerase activity. In addition, also controls telomerase holoenzyme complex localization to Cajal body. During S phase, required for delivery of TERC to telomeres during S phase and for telomerase activity. In addition to its role in telomere maintenance, also required for Cajal body formation, probably by mediating localization of scaRNAs to Cajal bodies. Also plays a role in DNA repair: phosphorylated by ATM in response to DNA damage and relocalizes to sites of DNA double-strand breaks to promote the repair of DNA double-strand breaks. Acts by recruiting the ubiquitin ligase RNF8 to DNA breaks and promote both homologous recombination (HR) and non-homologous end joining (NHEJ).</text>
</comment>
<comment type="subunit">
    <text evidence="1">Component of the telomerase holoenzyme complex composed of one molecule of TERT, one molecule of WRAP53/TCAB1, two molecules of H/ACA ribonucleoprotein complex subunits DKC1, NOP10, NHP2 and GAR1, and a telomerase RNA template component (TERC). The telomerase holoenzyme complex is associated with TEP1, SMG6/EST1A and POT1. Interacts with the chaperonin-containing T-complex (TRiC) complex; which mediates the folding of WRAP53/TCAB1. Interacts with COIL. Interacts with SMN1. Interacts with RNF8. Interacts with histone H2AX.</text>
</comment>
<comment type="subcellular location">
    <subcellularLocation>
        <location evidence="1">Nucleus</location>
        <location evidence="1">Cajal body</location>
    </subcellularLocation>
    <subcellularLocation>
        <location evidence="1">Chromosome</location>
        <location evidence="1">Telomere</location>
    </subcellularLocation>
    <subcellularLocation>
        <location evidence="1">Chromosome</location>
    </subcellularLocation>
    <text evidence="1">Released from telomerase RNA template component (TERC) in mitotic cells coincident with delocalization from Cajal bodies. In response to DNA damage, localizes to sites of DNA double-strand breaks following phosphorylation by ATM.</text>
</comment>
<comment type="PTM">
    <text evidence="1">Phosphorylated at Ser-64 by ATM in response to DNA damage, promoting its interaction with histone H2AX and localization to sites of DNA double-strand breaks.</text>
</comment>
<comment type="similarity">
    <text evidence="4">Belongs to the TCAB1 family.</text>
</comment>
<keyword id="KW-0143">Chaperone</keyword>
<keyword id="KW-0158">Chromosome</keyword>
<keyword id="KW-0227">DNA damage</keyword>
<keyword id="KW-0234">DNA repair</keyword>
<keyword id="KW-0539">Nucleus</keyword>
<keyword id="KW-0597">Phosphoprotein</keyword>
<keyword id="KW-1185">Reference proteome</keyword>
<keyword id="KW-0677">Repeat</keyword>
<keyword id="KW-0694">RNA-binding</keyword>
<keyword id="KW-0779">Telomere</keyword>
<keyword id="KW-0853">WD repeat</keyword>
<dbReference type="EMBL" id="BC104583">
    <property type="protein sequence ID" value="AAI04584.1"/>
    <property type="molecule type" value="mRNA"/>
</dbReference>
<dbReference type="RefSeq" id="NP_001030245.1">
    <property type="nucleotide sequence ID" value="NM_001035073.1"/>
</dbReference>
<dbReference type="SMR" id="Q3SWZ7"/>
<dbReference type="FunCoup" id="Q3SWZ7">
    <property type="interactions" value="4409"/>
</dbReference>
<dbReference type="STRING" id="9913.ENSBTAP00000057850"/>
<dbReference type="PaxDb" id="9913-ENSBTAP00000001421"/>
<dbReference type="GeneID" id="509631"/>
<dbReference type="KEGG" id="bta:509631"/>
<dbReference type="CTD" id="55135"/>
<dbReference type="eggNOG" id="KOG2919">
    <property type="taxonomic scope" value="Eukaryota"/>
</dbReference>
<dbReference type="InParanoid" id="Q3SWZ7"/>
<dbReference type="OrthoDB" id="239865at2759"/>
<dbReference type="Proteomes" id="UP000009136">
    <property type="component" value="Unplaced"/>
</dbReference>
<dbReference type="GO" id="GO:0015030">
    <property type="term" value="C:Cajal body"/>
    <property type="evidence" value="ECO:0000250"/>
    <property type="project" value="UniProtKB"/>
</dbReference>
<dbReference type="GO" id="GO:0000781">
    <property type="term" value="C:chromosome, telomeric region"/>
    <property type="evidence" value="ECO:0007669"/>
    <property type="project" value="UniProtKB-SubCell"/>
</dbReference>
<dbReference type="GO" id="GO:0035861">
    <property type="term" value="C:site of double-strand break"/>
    <property type="evidence" value="ECO:0000250"/>
    <property type="project" value="UniProtKB"/>
</dbReference>
<dbReference type="GO" id="GO:0005697">
    <property type="term" value="C:telomerase holoenzyme complex"/>
    <property type="evidence" value="ECO:0000250"/>
    <property type="project" value="UniProtKB"/>
</dbReference>
<dbReference type="GO" id="GO:0003723">
    <property type="term" value="F:RNA binding"/>
    <property type="evidence" value="ECO:0000250"/>
    <property type="project" value="UniProtKB"/>
</dbReference>
<dbReference type="GO" id="GO:0070034">
    <property type="term" value="F:telomerase RNA binding"/>
    <property type="evidence" value="ECO:0000250"/>
    <property type="project" value="UniProtKB"/>
</dbReference>
<dbReference type="GO" id="GO:0030576">
    <property type="term" value="P:Cajal body organization"/>
    <property type="evidence" value="ECO:0000250"/>
    <property type="project" value="UniProtKB"/>
</dbReference>
<dbReference type="GO" id="GO:0006281">
    <property type="term" value="P:DNA repair"/>
    <property type="evidence" value="ECO:0007669"/>
    <property type="project" value="UniProtKB-KW"/>
</dbReference>
<dbReference type="GO" id="GO:0045739">
    <property type="term" value="P:positive regulation of DNA repair"/>
    <property type="evidence" value="ECO:0000250"/>
    <property type="project" value="UniProtKB"/>
</dbReference>
<dbReference type="GO" id="GO:2000781">
    <property type="term" value="P:positive regulation of double-strand break repair"/>
    <property type="evidence" value="ECO:0000250"/>
    <property type="project" value="UniProtKB"/>
</dbReference>
<dbReference type="GO" id="GO:1905168">
    <property type="term" value="P:positive regulation of double-strand break repair via homologous recombination"/>
    <property type="evidence" value="ECO:0000250"/>
    <property type="project" value="UniProtKB"/>
</dbReference>
<dbReference type="GO" id="GO:2001034">
    <property type="term" value="P:positive regulation of double-strand break repair via nonhomologous end joining"/>
    <property type="evidence" value="ECO:0000250"/>
    <property type="project" value="UniProtKB"/>
</dbReference>
<dbReference type="GO" id="GO:1904867">
    <property type="term" value="P:protein localization to Cajal body"/>
    <property type="evidence" value="ECO:0000250"/>
    <property type="project" value="UniProtKB"/>
</dbReference>
<dbReference type="GO" id="GO:0034337">
    <property type="term" value="P:RNA folding"/>
    <property type="evidence" value="ECO:0000250"/>
    <property type="project" value="UniProtKB"/>
</dbReference>
<dbReference type="GO" id="GO:0090666">
    <property type="term" value="P:scaRNA localization to Cajal body"/>
    <property type="evidence" value="ECO:0000250"/>
    <property type="project" value="UniProtKB"/>
</dbReference>
<dbReference type="GO" id="GO:0032203">
    <property type="term" value="P:telomere formation via telomerase"/>
    <property type="evidence" value="ECO:0000250"/>
    <property type="project" value="UniProtKB"/>
</dbReference>
<dbReference type="GO" id="GO:0007004">
    <property type="term" value="P:telomere maintenance via telomerase"/>
    <property type="evidence" value="ECO:0000250"/>
    <property type="project" value="UniProtKB"/>
</dbReference>
<dbReference type="FunFam" id="2.130.10.10:FF:000646">
    <property type="entry name" value="WD repeat containing antisense to TP53"/>
    <property type="match status" value="1"/>
</dbReference>
<dbReference type="Gene3D" id="2.130.10.10">
    <property type="entry name" value="YVTN repeat-like/Quinoprotein amine dehydrogenase"/>
    <property type="match status" value="1"/>
</dbReference>
<dbReference type="InterPro" id="IPR051150">
    <property type="entry name" value="SWT21/TCAB1_mRNA_Telomere"/>
</dbReference>
<dbReference type="InterPro" id="IPR015943">
    <property type="entry name" value="WD40/YVTN_repeat-like_dom_sf"/>
</dbReference>
<dbReference type="InterPro" id="IPR036322">
    <property type="entry name" value="WD40_repeat_dom_sf"/>
</dbReference>
<dbReference type="InterPro" id="IPR001680">
    <property type="entry name" value="WD40_rpt"/>
</dbReference>
<dbReference type="PANTHER" id="PTHR13211">
    <property type="entry name" value="TELOMERASE CAJAL BODY PROTEIN 1"/>
    <property type="match status" value="1"/>
</dbReference>
<dbReference type="PANTHER" id="PTHR13211:SF0">
    <property type="entry name" value="TELOMERASE CAJAL BODY PROTEIN 1"/>
    <property type="match status" value="1"/>
</dbReference>
<dbReference type="Pfam" id="PF00400">
    <property type="entry name" value="WD40"/>
    <property type="match status" value="5"/>
</dbReference>
<dbReference type="SMART" id="SM00320">
    <property type="entry name" value="WD40"/>
    <property type="match status" value="6"/>
</dbReference>
<dbReference type="SUPFAM" id="SSF50978">
    <property type="entry name" value="WD40 repeat-like"/>
    <property type="match status" value="1"/>
</dbReference>
<dbReference type="PROSITE" id="PS50082">
    <property type="entry name" value="WD_REPEATS_2"/>
    <property type="match status" value="1"/>
</dbReference>
<dbReference type="PROSITE" id="PS50294">
    <property type="entry name" value="WD_REPEATS_REGION"/>
    <property type="match status" value="1"/>
</dbReference>
<gene>
    <name evidence="1" type="primary">WRAP53</name>
    <name evidence="1" type="synonym">TCAB1</name>
    <name evidence="1" type="synonym">WDR79</name>
</gene>
<evidence type="ECO:0000250" key="1">
    <source>
        <dbReference type="UniProtKB" id="Q9BUR4"/>
    </source>
</evidence>
<evidence type="ECO:0000255" key="2"/>
<evidence type="ECO:0000256" key="3">
    <source>
        <dbReference type="SAM" id="MobiDB-lite"/>
    </source>
</evidence>
<evidence type="ECO:0000305" key="4"/>
<protein>
    <recommendedName>
        <fullName evidence="1">Telomerase Cajal body protein 1</fullName>
    </recommendedName>
    <alternativeName>
        <fullName evidence="1">WD repeat-containing protein 79</fullName>
    </alternativeName>
    <alternativeName>
        <fullName evidence="1">WD40 repeat-containing protein antisense to TP53 gene homolog</fullName>
    </alternativeName>
</protein>
<name>TCAB1_BOVIN</name>
<organism>
    <name type="scientific">Bos taurus</name>
    <name type="common">Bovine</name>
    <dbReference type="NCBI Taxonomy" id="9913"/>
    <lineage>
        <taxon>Eukaryota</taxon>
        <taxon>Metazoa</taxon>
        <taxon>Chordata</taxon>
        <taxon>Craniata</taxon>
        <taxon>Vertebrata</taxon>
        <taxon>Euteleostomi</taxon>
        <taxon>Mammalia</taxon>
        <taxon>Eutheria</taxon>
        <taxon>Laurasiatheria</taxon>
        <taxon>Artiodactyla</taxon>
        <taxon>Ruminantia</taxon>
        <taxon>Pecora</taxon>
        <taxon>Bovidae</taxon>
        <taxon>Bovinae</taxon>
        <taxon>Bos</taxon>
    </lineage>
</organism>
<feature type="chain" id="PRO_0000242695" description="Telomerase Cajal body protein 1">
    <location>
        <begin position="1"/>
        <end position="540"/>
    </location>
</feature>
<feature type="repeat" description="WD 1" evidence="2">
    <location>
        <begin position="158"/>
        <end position="197"/>
    </location>
</feature>
<feature type="repeat" description="WD 2" evidence="2">
    <location>
        <begin position="213"/>
        <end position="258"/>
    </location>
</feature>
<feature type="repeat" description="WD 3" evidence="2">
    <location>
        <begin position="263"/>
        <end position="304"/>
    </location>
</feature>
<feature type="repeat" description="WD 4" evidence="2">
    <location>
        <begin position="314"/>
        <end position="355"/>
    </location>
</feature>
<feature type="repeat" description="WD 5" evidence="2">
    <location>
        <begin position="356"/>
        <end position="396"/>
    </location>
</feature>
<feature type="repeat" description="WD 6" evidence="2">
    <location>
        <begin position="402"/>
        <end position="441"/>
    </location>
</feature>
<feature type="region of interest" description="Disordered" evidence="3">
    <location>
        <begin position="1"/>
        <end position="126"/>
    </location>
</feature>
<feature type="region of interest" description="Disordered" evidence="3">
    <location>
        <begin position="520"/>
        <end position="540"/>
    </location>
</feature>
<feature type="compositionally biased region" description="Pro residues" evidence="3">
    <location>
        <begin position="1"/>
        <end position="10"/>
    </location>
</feature>
<feature type="compositionally biased region" description="Acidic residues" evidence="3">
    <location>
        <begin position="116"/>
        <end position="126"/>
    </location>
</feature>
<feature type="compositionally biased region" description="Gly residues" evidence="3">
    <location>
        <begin position="531"/>
        <end position="540"/>
    </location>
</feature>
<feature type="modified residue" description="Phosphoserine" evidence="1">
    <location>
        <position position="26"/>
    </location>
</feature>
<feature type="modified residue" description="Phosphoserine" evidence="1">
    <location>
        <position position="30"/>
    </location>
</feature>
<feature type="modified residue" description="Phosphoserine" evidence="1">
    <location>
        <position position="54"/>
    </location>
</feature>
<feature type="modified residue" description="Phosphoserine" evidence="1">
    <location>
        <position position="64"/>
    </location>
</feature>
<feature type="modified residue" description="Phosphoserine" evidence="1">
    <location>
        <position position="85"/>
    </location>
</feature>
<feature type="modified residue" description="Phosphoserine" evidence="1">
    <location>
        <position position="90"/>
    </location>
</feature>
<feature type="modified residue" description="Phosphothreonine" evidence="1">
    <location>
        <position position="480"/>
    </location>
</feature>
<feature type="modified residue" description="Phosphoserine" evidence="1">
    <location>
        <position position="482"/>
    </location>
</feature>
<reference key="1">
    <citation type="submission" date="2005-09" db="EMBL/GenBank/DDBJ databases">
        <authorList>
            <consortium name="NIH - Mammalian Gene Collection (MGC) project"/>
        </authorList>
    </citation>
    <scope>NUCLEOTIDE SEQUENCE [LARGE SCALE MRNA]</scope>
    <source>
        <strain>Hereford</strain>
        <tissue>Ascending colon</tissue>
    </source>
</reference>
<sequence>MKTPEAPPLAPDCLPSDQAPAPARLSRQASPMDKNTDPELMPTPRDGDDPPQVSSDPMVGLALSQELEEGVPASLPTPLESGFGSPSELSSRVEEKELSENVSLPAEETNRPELGPGEDVEGVSEELTPEDEGYTIWNYNFSQVPRFLSGSWSEFITQPENFLKGCKWAPDGSCILTNSADNILRIYNLPPELYNEGEQLEYAEMAPVLRMVEGDTIYDYCWYSLMSSAQPDTSYVASSSRENPIHIWDAFTGELRASFRSYNHLDELTAAHSLCFSPDGSQLFCGFNRTVRVFSTSRPGRDCEVRTTFAKRQGQSGIISCIAFSPTQPLYACGSYGRSLGLYTWEDGSPLALLGGHQGGITHLCFHPDGNCFFSGARKDAELLCWDLRQLGHPLWSLSREVTTNQRIYFDLDPTGQFLVSGSTSGAVSVWDTGGAGLESKPEPVLSFQPQKDCTNGVSLHPSLPLLATASGQRVFPEPTESGDEREEEVDLPLLSMRHVHLECQLQLWWCGGGPDTSISDAHQEEMGQGRTEGGGGEFT</sequence>